<gene>
    <name evidence="1" type="primary">tyrS</name>
    <name type="ordered locus">STH1122</name>
</gene>
<accession>Q67QD6</accession>
<dbReference type="EC" id="6.1.1.1" evidence="1"/>
<dbReference type="EMBL" id="AP006840">
    <property type="protein sequence ID" value="BAD40107.1"/>
    <property type="molecule type" value="Genomic_DNA"/>
</dbReference>
<dbReference type="RefSeq" id="WP_011195254.1">
    <property type="nucleotide sequence ID" value="NC_006177.1"/>
</dbReference>
<dbReference type="SMR" id="Q67QD6"/>
<dbReference type="STRING" id="292459.STH1122"/>
<dbReference type="KEGG" id="sth:STH1122"/>
<dbReference type="eggNOG" id="COG0162">
    <property type="taxonomic scope" value="Bacteria"/>
</dbReference>
<dbReference type="HOGENOM" id="CLU_024003_5_0_9"/>
<dbReference type="OrthoDB" id="9804243at2"/>
<dbReference type="Proteomes" id="UP000000417">
    <property type="component" value="Chromosome"/>
</dbReference>
<dbReference type="GO" id="GO:0005829">
    <property type="term" value="C:cytosol"/>
    <property type="evidence" value="ECO:0007669"/>
    <property type="project" value="TreeGrafter"/>
</dbReference>
<dbReference type="GO" id="GO:0005524">
    <property type="term" value="F:ATP binding"/>
    <property type="evidence" value="ECO:0007669"/>
    <property type="project" value="UniProtKB-UniRule"/>
</dbReference>
<dbReference type="GO" id="GO:0003723">
    <property type="term" value="F:RNA binding"/>
    <property type="evidence" value="ECO:0007669"/>
    <property type="project" value="UniProtKB-KW"/>
</dbReference>
<dbReference type="GO" id="GO:0004831">
    <property type="term" value="F:tyrosine-tRNA ligase activity"/>
    <property type="evidence" value="ECO:0007669"/>
    <property type="project" value="UniProtKB-UniRule"/>
</dbReference>
<dbReference type="GO" id="GO:0006437">
    <property type="term" value="P:tyrosyl-tRNA aminoacylation"/>
    <property type="evidence" value="ECO:0007669"/>
    <property type="project" value="UniProtKB-UniRule"/>
</dbReference>
<dbReference type="CDD" id="cd00165">
    <property type="entry name" value="S4"/>
    <property type="match status" value="1"/>
</dbReference>
<dbReference type="CDD" id="cd00805">
    <property type="entry name" value="TyrRS_core"/>
    <property type="match status" value="1"/>
</dbReference>
<dbReference type="FunFam" id="3.40.50.620:FF:000061">
    <property type="entry name" value="Tyrosine--tRNA ligase"/>
    <property type="match status" value="1"/>
</dbReference>
<dbReference type="Gene3D" id="3.40.50.620">
    <property type="entry name" value="HUPs"/>
    <property type="match status" value="1"/>
</dbReference>
<dbReference type="Gene3D" id="3.10.290.10">
    <property type="entry name" value="RNA-binding S4 domain"/>
    <property type="match status" value="1"/>
</dbReference>
<dbReference type="Gene3D" id="1.10.240.10">
    <property type="entry name" value="Tyrosyl-Transfer RNA Synthetase"/>
    <property type="match status" value="1"/>
</dbReference>
<dbReference type="HAMAP" id="MF_02007">
    <property type="entry name" value="Tyr_tRNA_synth_type2"/>
    <property type="match status" value="1"/>
</dbReference>
<dbReference type="InterPro" id="IPR001412">
    <property type="entry name" value="aa-tRNA-synth_I_CS"/>
</dbReference>
<dbReference type="InterPro" id="IPR002305">
    <property type="entry name" value="aa-tRNA-synth_Ic"/>
</dbReference>
<dbReference type="InterPro" id="IPR014729">
    <property type="entry name" value="Rossmann-like_a/b/a_fold"/>
</dbReference>
<dbReference type="InterPro" id="IPR002942">
    <property type="entry name" value="S4_RNA-bd"/>
</dbReference>
<dbReference type="InterPro" id="IPR036986">
    <property type="entry name" value="S4_RNA-bd_sf"/>
</dbReference>
<dbReference type="InterPro" id="IPR002307">
    <property type="entry name" value="Tyr-tRNA-ligase"/>
</dbReference>
<dbReference type="InterPro" id="IPR024088">
    <property type="entry name" value="Tyr-tRNA-ligase_bac-type"/>
</dbReference>
<dbReference type="InterPro" id="IPR024108">
    <property type="entry name" value="Tyr-tRNA-ligase_bac_2"/>
</dbReference>
<dbReference type="NCBIfam" id="TIGR00234">
    <property type="entry name" value="tyrS"/>
    <property type="match status" value="1"/>
</dbReference>
<dbReference type="PANTHER" id="PTHR11766:SF1">
    <property type="entry name" value="TYROSINE--TRNA LIGASE"/>
    <property type="match status" value="1"/>
</dbReference>
<dbReference type="PANTHER" id="PTHR11766">
    <property type="entry name" value="TYROSYL-TRNA SYNTHETASE"/>
    <property type="match status" value="1"/>
</dbReference>
<dbReference type="Pfam" id="PF01479">
    <property type="entry name" value="S4"/>
    <property type="match status" value="1"/>
</dbReference>
<dbReference type="Pfam" id="PF00579">
    <property type="entry name" value="tRNA-synt_1b"/>
    <property type="match status" value="1"/>
</dbReference>
<dbReference type="PRINTS" id="PR01040">
    <property type="entry name" value="TRNASYNTHTYR"/>
</dbReference>
<dbReference type="SMART" id="SM00363">
    <property type="entry name" value="S4"/>
    <property type="match status" value="1"/>
</dbReference>
<dbReference type="SUPFAM" id="SSF55174">
    <property type="entry name" value="Alpha-L RNA-binding motif"/>
    <property type="match status" value="1"/>
</dbReference>
<dbReference type="SUPFAM" id="SSF52374">
    <property type="entry name" value="Nucleotidylyl transferase"/>
    <property type="match status" value="1"/>
</dbReference>
<dbReference type="PROSITE" id="PS00178">
    <property type="entry name" value="AA_TRNA_LIGASE_I"/>
    <property type="match status" value="1"/>
</dbReference>
<dbReference type="PROSITE" id="PS50889">
    <property type="entry name" value="S4"/>
    <property type="match status" value="1"/>
</dbReference>
<name>SYY_SYMTH</name>
<sequence>MTMAFMSVDEQMKILMRGVVDLVSEEELRQKLERSVKTGRPLRVKLGIDPTGKDLTLGHTVPLRKLRDFVECGHQGVLIIGDYTAMVGDPTGRNEARPQLTHAETTANAQRYLEQAARVLDVSKLEIRRNSEWLAPMSFSDVIRLAAKSTVARMLEREDFKKRYEEGRPIFIHEFFYPLMQGTDSVAVQADVELGGTDQKFNLLAGRDLQRDAGQEPQVCLMTPIVEGLDGVQKMSKSLGNYIGLDHTPDEMFGRTMSIPDSLIITYFTYFTDVPQEEIERIEAAMAAGENPMTFKKQLGRAIITTYGGTEEEARLAEERWVAQFSRGEVPEDIPDVVLPAAELPMQAARVLFTAGLAPSLSEARRLIEQGGFTVDGEKVTDPRAELALRPGQVLKAGKRKYGRVVLK</sequence>
<evidence type="ECO:0000255" key="1">
    <source>
        <dbReference type="HAMAP-Rule" id="MF_02007"/>
    </source>
</evidence>
<organism>
    <name type="scientific">Symbiobacterium thermophilum (strain DSM 24528 / JCM 14929 / IAM 14863 / T)</name>
    <dbReference type="NCBI Taxonomy" id="292459"/>
    <lineage>
        <taxon>Bacteria</taxon>
        <taxon>Bacillati</taxon>
        <taxon>Bacillota</taxon>
        <taxon>Clostridia</taxon>
        <taxon>Eubacteriales</taxon>
        <taxon>Symbiobacteriaceae</taxon>
        <taxon>Symbiobacterium</taxon>
    </lineage>
</organism>
<feature type="chain" id="PRO_0000236762" description="Tyrosine--tRNA ligase">
    <location>
        <begin position="1"/>
        <end position="408"/>
    </location>
</feature>
<feature type="domain" description="S4 RNA-binding" evidence="1">
    <location>
        <begin position="346"/>
        <end position="407"/>
    </location>
</feature>
<feature type="short sequence motif" description="'HIGH' region">
    <location>
        <begin position="50"/>
        <end position="59"/>
    </location>
</feature>
<feature type="short sequence motif" description="'KMSKS' region">
    <location>
        <begin position="234"/>
        <end position="238"/>
    </location>
</feature>
<feature type="binding site" evidence="1">
    <location>
        <position position="237"/>
    </location>
    <ligand>
        <name>ATP</name>
        <dbReference type="ChEBI" id="CHEBI:30616"/>
    </ligand>
</feature>
<comment type="function">
    <text evidence="1">Catalyzes the attachment of tyrosine to tRNA(Tyr) in a two-step reaction: tyrosine is first activated by ATP to form Tyr-AMP and then transferred to the acceptor end of tRNA(Tyr).</text>
</comment>
<comment type="catalytic activity">
    <reaction evidence="1">
        <text>tRNA(Tyr) + L-tyrosine + ATP = L-tyrosyl-tRNA(Tyr) + AMP + diphosphate + H(+)</text>
        <dbReference type="Rhea" id="RHEA:10220"/>
        <dbReference type="Rhea" id="RHEA-COMP:9706"/>
        <dbReference type="Rhea" id="RHEA-COMP:9707"/>
        <dbReference type="ChEBI" id="CHEBI:15378"/>
        <dbReference type="ChEBI" id="CHEBI:30616"/>
        <dbReference type="ChEBI" id="CHEBI:33019"/>
        <dbReference type="ChEBI" id="CHEBI:58315"/>
        <dbReference type="ChEBI" id="CHEBI:78442"/>
        <dbReference type="ChEBI" id="CHEBI:78536"/>
        <dbReference type="ChEBI" id="CHEBI:456215"/>
        <dbReference type="EC" id="6.1.1.1"/>
    </reaction>
</comment>
<comment type="subunit">
    <text evidence="1">Homodimer.</text>
</comment>
<comment type="subcellular location">
    <subcellularLocation>
        <location evidence="1">Cytoplasm</location>
    </subcellularLocation>
</comment>
<comment type="similarity">
    <text evidence="1">Belongs to the class-I aminoacyl-tRNA synthetase family. TyrS type 2 subfamily.</text>
</comment>
<keyword id="KW-0030">Aminoacyl-tRNA synthetase</keyword>
<keyword id="KW-0067">ATP-binding</keyword>
<keyword id="KW-0963">Cytoplasm</keyword>
<keyword id="KW-0436">Ligase</keyword>
<keyword id="KW-0547">Nucleotide-binding</keyword>
<keyword id="KW-0648">Protein biosynthesis</keyword>
<keyword id="KW-1185">Reference proteome</keyword>
<keyword id="KW-0694">RNA-binding</keyword>
<reference key="1">
    <citation type="journal article" date="2004" name="Nucleic Acids Res.">
        <title>Genome sequence of Symbiobacterium thermophilum, an uncultivable bacterium that depends on microbial commensalism.</title>
        <authorList>
            <person name="Ueda K."/>
            <person name="Yamashita A."/>
            <person name="Ishikawa J."/>
            <person name="Shimada M."/>
            <person name="Watsuji T."/>
            <person name="Morimura K."/>
            <person name="Ikeda H."/>
            <person name="Hattori M."/>
            <person name="Beppu T."/>
        </authorList>
    </citation>
    <scope>NUCLEOTIDE SEQUENCE [LARGE SCALE GENOMIC DNA]</scope>
    <source>
        <strain>DSM 24528 / JCM 14929 / IAM 14863 / T</strain>
    </source>
</reference>
<proteinExistence type="inferred from homology"/>
<protein>
    <recommendedName>
        <fullName evidence="1">Tyrosine--tRNA ligase</fullName>
        <ecNumber evidence="1">6.1.1.1</ecNumber>
    </recommendedName>
    <alternativeName>
        <fullName evidence="1">Tyrosyl-tRNA synthetase</fullName>
        <shortName evidence="1">TyrRS</shortName>
    </alternativeName>
</protein>